<gene>
    <name evidence="1" type="primary">nadA</name>
    <name type="ordered locus">CKL_0748</name>
</gene>
<comment type="function">
    <text evidence="1">Catalyzes the condensation of iminoaspartate with dihydroxyacetone phosphate to form quinolinate.</text>
</comment>
<comment type="catalytic activity">
    <reaction evidence="1">
        <text>iminosuccinate + dihydroxyacetone phosphate = quinolinate + phosphate + 2 H2O + H(+)</text>
        <dbReference type="Rhea" id="RHEA:25888"/>
        <dbReference type="ChEBI" id="CHEBI:15377"/>
        <dbReference type="ChEBI" id="CHEBI:15378"/>
        <dbReference type="ChEBI" id="CHEBI:29959"/>
        <dbReference type="ChEBI" id="CHEBI:43474"/>
        <dbReference type="ChEBI" id="CHEBI:57642"/>
        <dbReference type="ChEBI" id="CHEBI:77875"/>
        <dbReference type="EC" id="2.5.1.72"/>
    </reaction>
    <physiologicalReaction direction="left-to-right" evidence="1">
        <dbReference type="Rhea" id="RHEA:25889"/>
    </physiologicalReaction>
</comment>
<comment type="cofactor">
    <cofactor evidence="1">
        <name>[4Fe-4S] cluster</name>
        <dbReference type="ChEBI" id="CHEBI:49883"/>
    </cofactor>
    <text evidence="1">Binds 1 [4Fe-4S] cluster per subunit.</text>
</comment>
<comment type="pathway">
    <text evidence="1">Cofactor biosynthesis; NAD(+) biosynthesis; quinolinate from iminoaspartate: step 1/1.</text>
</comment>
<comment type="subcellular location">
    <subcellularLocation>
        <location evidence="1">Cytoplasm</location>
    </subcellularLocation>
</comment>
<comment type="similarity">
    <text evidence="1">Belongs to the quinolinate synthase family. Type 2 subfamily.</text>
</comment>
<name>NADA_CLOK5</name>
<accession>A5N670</accession>
<dbReference type="EC" id="2.5.1.72" evidence="1"/>
<dbReference type="EMBL" id="CP000673">
    <property type="protein sequence ID" value="EDK32801.1"/>
    <property type="molecule type" value="Genomic_DNA"/>
</dbReference>
<dbReference type="RefSeq" id="WP_011989316.1">
    <property type="nucleotide sequence ID" value="NC_009706.1"/>
</dbReference>
<dbReference type="SMR" id="A5N670"/>
<dbReference type="STRING" id="431943.CKL_0748"/>
<dbReference type="KEGG" id="ckl:CKL_0748"/>
<dbReference type="eggNOG" id="COG0379">
    <property type="taxonomic scope" value="Bacteria"/>
</dbReference>
<dbReference type="HOGENOM" id="CLU_047382_0_0_9"/>
<dbReference type="UniPathway" id="UPA00253">
    <property type="reaction ID" value="UER00327"/>
</dbReference>
<dbReference type="Proteomes" id="UP000002411">
    <property type="component" value="Chromosome"/>
</dbReference>
<dbReference type="GO" id="GO:0005737">
    <property type="term" value="C:cytoplasm"/>
    <property type="evidence" value="ECO:0007669"/>
    <property type="project" value="UniProtKB-SubCell"/>
</dbReference>
<dbReference type="GO" id="GO:0051539">
    <property type="term" value="F:4 iron, 4 sulfur cluster binding"/>
    <property type="evidence" value="ECO:0007669"/>
    <property type="project" value="UniProtKB-KW"/>
</dbReference>
<dbReference type="GO" id="GO:0046872">
    <property type="term" value="F:metal ion binding"/>
    <property type="evidence" value="ECO:0007669"/>
    <property type="project" value="UniProtKB-KW"/>
</dbReference>
<dbReference type="GO" id="GO:0008987">
    <property type="term" value="F:quinolinate synthetase A activity"/>
    <property type="evidence" value="ECO:0007669"/>
    <property type="project" value="UniProtKB-UniRule"/>
</dbReference>
<dbReference type="GO" id="GO:0034628">
    <property type="term" value="P:'de novo' NAD biosynthetic process from L-aspartate"/>
    <property type="evidence" value="ECO:0007669"/>
    <property type="project" value="TreeGrafter"/>
</dbReference>
<dbReference type="FunFam" id="3.40.50.10800:FF:000001">
    <property type="entry name" value="Quinolinate synthase A"/>
    <property type="match status" value="1"/>
</dbReference>
<dbReference type="Gene3D" id="3.40.50.10800">
    <property type="entry name" value="NadA-like"/>
    <property type="match status" value="3"/>
</dbReference>
<dbReference type="HAMAP" id="MF_00568">
    <property type="entry name" value="NadA_type2"/>
    <property type="match status" value="1"/>
</dbReference>
<dbReference type="InterPro" id="IPR003473">
    <property type="entry name" value="NadA"/>
</dbReference>
<dbReference type="InterPro" id="IPR036094">
    <property type="entry name" value="NadA_sf"/>
</dbReference>
<dbReference type="InterPro" id="IPR023066">
    <property type="entry name" value="Quinolinate_synth_type2"/>
</dbReference>
<dbReference type="NCBIfam" id="TIGR00550">
    <property type="entry name" value="nadA"/>
    <property type="match status" value="1"/>
</dbReference>
<dbReference type="NCBIfam" id="NF006878">
    <property type="entry name" value="PRK09375.1-2"/>
    <property type="match status" value="1"/>
</dbReference>
<dbReference type="NCBIfam" id="NF006879">
    <property type="entry name" value="PRK09375.1-4"/>
    <property type="match status" value="1"/>
</dbReference>
<dbReference type="PANTHER" id="PTHR30573:SF0">
    <property type="entry name" value="QUINOLINATE SYNTHASE, CHLOROPLASTIC"/>
    <property type="match status" value="1"/>
</dbReference>
<dbReference type="PANTHER" id="PTHR30573">
    <property type="entry name" value="QUINOLINATE SYNTHETASE A"/>
    <property type="match status" value="1"/>
</dbReference>
<dbReference type="Pfam" id="PF02445">
    <property type="entry name" value="NadA"/>
    <property type="match status" value="1"/>
</dbReference>
<dbReference type="SUPFAM" id="SSF142754">
    <property type="entry name" value="NadA-like"/>
    <property type="match status" value="1"/>
</dbReference>
<evidence type="ECO:0000255" key="1">
    <source>
        <dbReference type="HAMAP-Rule" id="MF_00568"/>
    </source>
</evidence>
<protein>
    <recommendedName>
        <fullName evidence="1">Quinolinate synthase</fullName>
        <ecNumber evidence="1">2.5.1.72</ecNumber>
    </recommendedName>
</protein>
<feature type="chain" id="PRO_1000082314" description="Quinolinate synthase">
    <location>
        <begin position="1"/>
        <end position="303"/>
    </location>
</feature>
<feature type="binding site" evidence="1">
    <location>
        <position position="24"/>
    </location>
    <ligand>
        <name>iminosuccinate</name>
        <dbReference type="ChEBI" id="CHEBI:77875"/>
    </ligand>
</feature>
<feature type="binding site" evidence="1">
    <location>
        <position position="41"/>
    </location>
    <ligand>
        <name>iminosuccinate</name>
        <dbReference type="ChEBI" id="CHEBI:77875"/>
    </ligand>
</feature>
<feature type="binding site" evidence="1">
    <location>
        <position position="86"/>
    </location>
    <ligand>
        <name>[4Fe-4S] cluster</name>
        <dbReference type="ChEBI" id="CHEBI:49883"/>
    </ligand>
</feature>
<feature type="binding site" evidence="1">
    <location>
        <begin position="112"/>
        <end position="114"/>
    </location>
    <ligand>
        <name>iminosuccinate</name>
        <dbReference type="ChEBI" id="CHEBI:77875"/>
    </ligand>
</feature>
<feature type="binding site" evidence="1">
    <location>
        <position position="129"/>
    </location>
    <ligand>
        <name>iminosuccinate</name>
        <dbReference type="ChEBI" id="CHEBI:77875"/>
    </ligand>
</feature>
<feature type="binding site" evidence="1">
    <location>
        <position position="172"/>
    </location>
    <ligand>
        <name>[4Fe-4S] cluster</name>
        <dbReference type="ChEBI" id="CHEBI:49883"/>
    </ligand>
</feature>
<feature type="binding site" evidence="1">
    <location>
        <begin position="198"/>
        <end position="200"/>
    </location>
    <ligand>
        <name>iminosuccinate</name>
        <dbReference type="ChEBI" id="CHEBI:77875"/>
    </ligand>
</feature>
<feature type="binding site" evidence="1">
    <location>
        <position position="215"/>
    </location>
    <ligand>
        <name>iminosuccinate</name>
        <dbReference type="ChEBI" id="CHEBI:77875"/>
    </ligand>
</feature>
<feature type="binding site" evidence="1">
    <location>
        <position position="260"/>
    </location>
    <ligand>
        <name>[4Fe-4S] cluster</name>
        <dbReference type="ChEBI" id="CHEBI:49883"/>
    </ligand>
</feature>
<keyword id="KW-0004">4Fe-4S</keyword>
<keyword id="KW-0963">Cytoplasm</keyword>
<keyword id="KW-0408">Iron</keyword>
<keyword id="KW-0411">Iron-sulfur</keyword>
<keyword id="KW-0479">Metal-binding</keyword>
<keyword id="KW-0662">Pyridine nucleotide biosynthesis</keyword>
<keyword id="KW-1185">Reference proteome</keyword>
<keyword id="KW-0808">Transferase</keyword>
<organism>
    <name type="scientific">Clostridium kluyveri (strain ATCC 8527 / DSM 555 / NBRC 12016 / NCIMB 10680 / K1)</name>
    <dbReference type="NCBI Taxonomy" id="431943"/>
    <lineage>
        <taxon>Bacteria</taxon>
        <taxon>Bacillati</taxon>
        <taxon>Bacillota</taxon>
        <taxon>Clostridia</taxon>
        <taxon>Eubacteriales</taxon>
        <taxon>Clostridiaceae</taxon>
        <taxon>Clostridium</taxon>
    </lineage>
</organism>
<sequence>MDDLFLVNEINRLKIERDACILAHNYQLPEVQDIADIVGDSLALSRAAAETTNKVIVFCGVKFMAESAKILSPDKTVLIPSKYAGCPLADSITKEQLEMEKKKHPEAEVICYVNSSAEVKAVSDVSCTSSNAVKVVQNSKSNKILFVPDENLAGYVAEQIPDKEIIPWAGHCITHARITVDDVIKAQEEHPEAEMLVHPEVSEEIRENADFVGSTSAIINYAKNSDSKEFIIGTEIGVLHKMKKDSPEKQFYLLSPRLVCENMKMTRLVDVYNSLMNMQYEVFVPENVRIKALGSLEKMISIE</sequence>
<proteinExistence type="inferred from homology"/>
<reference key="1">
    <citation type="journal article" date="2008" name="Proc. Natl. Acad. Sci. U.S.A.">
        <title>The genome of Clostridium kluyveri, a strict anaerobe with unique metabolic features.</title>
        <authorList>
            <person name="Seedorf H."/>
            <person name="Fricke W.F."/>
            <person name="Veith B."/>
            <person name="Brueggemann H."/>
            <person name="Liesegang H."/>
            <person name="Strittmatter A."/>
            <person name="Miethke M."/>
            <person name="Buckel W."/>
            <person name="Hinderberger J."/>
            <person name="Li F."/>
            <person name="Hagemeier C."/>
            <person name="Thauer R.K."/>
            <person name="Gottschalk G."/>
        </authorList>
    </citation>
    <scope>NUCLEOTIDE SEQUENCE [LARGE SCALE GENOMIC DNA]</scope>
    <source>
        <strain>ATCC 8527 / DSM 555 / NBRC 12016 / NCIMB 10680 / K1</strain>
    </source>
</reference>